<organism>
    <name type="scientific">Xylella fastidiosa (strain M23)</name>
    <dbReference type="NCBI Taxonomy" id="405441"/>
    <lineage>
        <taxon>Bacteria</taxon>
        <taxon>Pseudomonadati</taxon>
        <taxon>Pseudomonadota</taxon>
        <taxon>Gammaproteobacteria</taxon>
        <taxon>Lysobacterales</taxon>
        <taxon>Lysobacteraceae</taxon>
        <taxon>Xylella</taxon>
    </lineage>
</organism>
<accession>B2I9H7</accession>
<sequence>MTRPDLNERILSLRKLRLAQCRTRTRRTIERRNGVRLEINGSWLVEFCSNDYLGLAQHFEIIAALQDAAARNGIGATASHLICGHHAIHKALEYELAEWLGYPRALLFGSGFTANLAVQQALLTKENDICVQDRLNHASLIDATRLAGCRLRRYPHLDVDGAAHQLKNAPEGAAMLATDGIFSMDGDIAPLRALSLVARTQQALMYVDDAHGIGVTGPQGRGCIAAAWLSVEEVPLQLVTLSKALGGYGAAVLGSATLIQHLAETARPYIYTTALPPAQAAAALTAIRIARRDEWRRQRLQELVERFRENSRRHGLEIMDSETPIQPLQCGDETTTMAMSAALEREGFLVNAIRPPTVPEGKSRLRVTLSALHTTEQIDTLVQALARSRDALATEAAPVKV</sequence>
<dbReference type="EC" id="2.3.1.47" evidence="1"/>
<dbReference type="EMBL" id="CP001011">
    <property type="protein sequence ID" value="ACB92071.1"/>
    <property type="molecule type" value="Genomic_DNA"/>
</dbReference>
<dbReference type="RefSeq" id="WP_004090644.1">
    <property type="nucleotide sequence ID" value="NC_010577.1"/>
</dbReference>
<dbReference type="SMR" id="B2I9H7"/>
<dbReference type="GeneID" id="93904313"/>
<dbReference type="KEGG" id="xfn:XfasM23_0628"/>
<dbReference type="HOGENOM" id="CLU_015846_11_2_6"/>
<dbReference type="UniPathway" id="UPA00078"/>
<dbReference type="Proteomes" id="UP000001698">
    <property type="component" value="Chromosome"/>
</dbReference>
<dbReference type="GO" id="GO:0008710">
    <property type="term" value="F:8-amino-7-oxononanoate synthase activity"/>
    <property type="evidence" value="ECO:0007669"/>
    <property type="project" value="UniProtKB-UniRule"/>
</dbReference>
<dbReference type="GO" id="GO:0030170">
    <property type="term" value="F:pyridoxal phosphate binding"/>
    <property type="evidence" value="ECO:0007669"/>
    <property type="project" value="UniProtKB-UniRule"/>
</dbReference>
<dbReference type="GO" id="GO:0009102">
    <property type="term" value="P:biotin biosynthetic process"/>
    <property type="evidence" value="ECO:0007669"/>
    <property type="project" value="UniProtKB-UniRule"/>
</dbReference>
<dbReference type="Gene3D" id="3.90.1150.10">
    <property type="entry name" value="Aspartate Aminotransferase, domain 1"/>
    <property type="match status" value="1"/>
</dbReference>
<dbReference type="Gene3D" id="3.40.640.10">
    <property type="entry name" value="Type I PLP-dependent aspartate aminotransferase-like (Major domain)"/>
    <property type="match status" value="1"/>
</dbReference>
<dbReference type="HAMAP" id="MF_01693">
    <property type="entry name" value="BioF_aminotrans_2"/>
    <property type="match status" value="1"/>
</dbReference>
<dbReference type="InterPro" id="IPR001917">
    <property type="entry name" value="Aminotrans_II_pyridoxalP_BS"/>
</dbReference>
<dbReference type="InterPro" id="IPR004839">
    <property type="entry name" value="Aminotransferase_I/II_large"/>
</dbReference>
<dbReference type="InterPro" id="IPR050087">
    <property type="entry name" value="AON_synthase_class-II"/>
</dbReference>
<dbReference type="InterPro" id="IPR004723">
    <property type="entry name" value="AONS_Archaea/Proteobacteria"/>
</dbReference>
<dbReference type="InterPro" id="IPR022834">
    <property type="entry name" value="AONS_Proteobacteria"/>
</dbReference>
<dbReference type="InterPro" id="IPR015424">
    <property type="entry name" value="PyrdxlP-dep_Trfase"/>
</dbReference>
<dbReference type="InterPro" id="IPR015421">
    <property type="entry name" value="PyrdxlP-dep_Trfase_major"/>
</dbReference>
<dbReference type="InterPro" id="IPR015422">
    <property type="entry name" value="PyrdxlP-dep_Trfase_small"/>
</dbReference>
<dbReference type="NCBIfam" id="TIGR00858">
    <property type="entry name" value="bioF"/>
    <property type="match status" value="1"/>
</dbReference>
<dbReference type="PANTHER" id="PTHR13693:SF100">
    <property type="entry name" value="8-AMINO-7-OXONONANOATE SYNTHASE"/>
    <property type="match status" value="1"/>
</dbReference>
<dbReference type="PANTHER" id="PTHR13693">
    <property type="entry name" value="CLASS II AMINOTRANSFERASE/8-AMINO-7-OXONONANOATE SYNTHASE"/>
    <property type="match status" value="1"/>
</dbReference>
<dbReference type="Pfam" id="PF00155">
    <property type="entry name" value="Aminotran_1_2"/>
    <property type="match status" value="1"/>
</dbReference>
<dbReference type="SUPFAM" id="SSF53383">
    <property type="entry name" value="PLP-dependent transferases"/>
    <property type="match status" value="1"/>
</dbReference>
<dbReference type="PROSITE" id="PS00599">
    <property type="entry name" value="AA_TRANSFER_CLASS_2"/>
    <property type="match status" value="1"/>
</dbReference>
<comment type="function">
    <text evidence="1">Catalyzes the decarboxylative condensation of pimeloyl-[acyl-carrier protein] and L-alanine to produce 8-amino-7-oxononanoate (AON), [acyl-carrier protein], and carbon dioxide.</text>
</comment>
<comment type="catalytic activity">
    <reaction evidence="1">
        <text>6-carboxyhexanoyl-[ACP] + L-alanine + H(+) = (8S)-8-amino-7-oxononanoate + holo-[ACP] + CO2</text>
        <dbReference type="Rhea" id="RHEA:42288"/>
        <dbReference type="Rhea" id="RHEA-COMP:9685"/>
        <dbReference type="Rhea" id="RHEA-COMP:9955"/>
        <dbReference type="ChEBI" id="CHEBI:15378"/>
        <dbReference type="ChEBI" id="CHEBI:16526"/>
        <dbReference type="ChEBI" id="CHEBI:57972"/>
        <dbReference type="ChEBI" id="CHEBI:64479"/>
        <dbReference type="ChEBI" id="CHEBI:78846"/>
        <dbReference type="ChEBI" id="CHEBI:149468"/>
        <dbReference type="EC" id="2.3.1.47"/>
    </reaction>
</comment>
<comment type="cofactor">
    <cofactor evidence="1">
        <name>pyridoxal 5'-phosphate</name>
        <dbReference type="ChEBI" id="CHEBI:597326"/>
    </cofactor>
</comment>
<comment type="pathway">
    <text evidence="1">Cofactor biosynthesis; biotin biosynthesis.</text>
</comment>
<comment type="subunit">
    <text evidence="1">Homodimer.</text>
</comment>
<comment type="similarity">
    <text evidence="1">Belongs to the class-II pyridoxal-phosphate-dependent aminotransferase family. BioF subfamily.</text>
</comment>
<feature type="chain" id="PRO_0000381148" description="8-amino-7-oxononanoate synthase">
    <location>
        <begin position="1"/>
        <end position="401"/>
    </location>
</feature>
<feature type="binding site" evidence="1">
    <location>
        <position position="24"/>
    </location>
    <ligand>
        <name>substrate</name>
    </ligand>
</feature>
<feature type="binding site" evidence="1">
    <location>
        <begin position="111"/>
        <end position="112"/>
    </location>
    <ligand>
        <name>pyridoxal 5'-phosphate</name>
        <dbReference type="ChEBI" id="CHEBI:597326"/>
    </ligand>
</feature>
<feature type="binding site" evidence="1">
    <location>
        <position position="137"/>
    </location>
    <ligand>
        <name>substrate</name>
    </ligand>
</feature>
<feature type="binding site" evidence="1">
    <location>
        <position position="183"/>
    </location>
    <ligand>
        <name>pyridoxal 5'-phosphate</name>
        <dbReference type="ChEBI" id="CHEBI:597326"/>
    </ligand>
</feature>
<feature type="binding site" evidence="1">
    <location>
        <position position="211"/>
    </location>
    <ligand>
        <name>pyridoxal 5'-phosphate</name>
        <dbReference type="ChEBI" id="CHEBI:597326"/>
    </ligand>
</feature>
<feature type="binding site" evidence="1">
    <location>
        <position position="240"/>
    </location>
    <ligand>
        <name>pyridoxal 5'-phosphate</name>
        <dbReference type="ChEBI" id="CHEBI:597326"/>
    </ligand>
</feature>
<feature type="binding site" evidence="1">
    <location>
        <position position="357"/>
    </location>
    <ligand>
        <name>substrate</name>
    </ligand>
</feature>
<feature type="modified residue" description="N6-(pyridoxal phosphate)lysine" evidence="1">
    <location>
        <position position="243"/>
    </location>
</feature>
<evidence type="ECO:0000255" key="1">
    <source>
        <dbReference type="HAMAP-Rule" id="MF_01693"/>
    </source>
</evidence>
<proteinExistence type="inferred from homology"/>
<keyword id="KW-0093">Biotin biosynthesis</keyword>
<keyword id="KW-0663">Pyridoxal phosphate</keyword>
<keyword id="KW-0808">Transferase</keyword>
<gene>
    <name evidence="1" type="primary">bioF</name>
    <name type="ordered locus">XfasM23_0628</name>
</gene>
<protein>
    <recommendedName>
        <fullName evidence="1">8-amino-7-oxononanoate synthase</fullName>
        <shortName evidence="1">AONS</shortName>
        <ecNumber evidence="1">2.3.1.47</ecNumber>
    </recommendedName>
    <alternativeName>
        <fullName evidence="1">7-keto-8-amino-pelargonic acid synthase</fullName>
        <shortName evidence="1">7-KAP synthase</shortName>
        <shortName evidence="1">KAPA synthase</shortName>
    </alternativeName>
    <alternativeName>
        <fullName evidence="1">8-amino-7-ketopelargonate synthase</fullName>
    </alternativeName>
</protein>
<reference key="1">
    <citation type="journal article" date="2010" name="J. Bacteriol.">
        <title>Whole genome sequences of two Xylella fastidiosa strains (M12 and M23) causing almond leaf scorch disease in California.</title>
        <authorList>
            <person name="Chen J."/>
            <person name="Xie G."/>
            <person name="Han S."/>
            <person name="Chertkov O."/>
            <person name="Sims D."/>
            <person name="Civerolo E.L."/>
        </authorList>
    </citation>
    <scope>NUCLEOTIDE SEQUENCE [LARGE SCALE GENOMIC DNA]</scope>
    <source>
        <strain>M23</strain>
    </source>
</reference>
<name>BIOF_XYLF2</name>